<protein>
    <recommendedName>
        <fullName evidence="5">Transcription factor BHLH148</fullName>
    </recommendedName>
    <alternativeName>
        <fullName evidence="4">Basic helix-loop-helix protein 148</fullName>
        <shortName evidence="4">OsbHLH148</shortName>
    </alternativeName>
    <alternativeName>
        <fullName evidence="5">bHLH transcription factor bHLH148</fullName>
    </alternativeName>
</protein>
<dbReference type="EMBL" id="HQ858871">
    <property type="protein sequence ID" value="ADX60283.1"/>
    <property type="molecule type" value="mRNA"/>
</dbReference>
<dbReference type="EMBL" id="AC096855">
    <property type="protein sequence ID" value="AAR87309.1"/>
    <property type="molecule type" value="Genomic_DNA"/>
</dbReference>
<dbReference type="EMBL" id="DP000009">
    <property type="protein sequence ID" value="ABF98794.1"/>
    <property type="molecule type" value="Genomic_DNA"/>
</dbReference>
<dbReference type="EMBL" id="AP008209">
    <property type="protein sequence ID" value="BAF13135.1"/>
    <property type="molecule type" value="Genomic_DNA"/>
</dbReference>
<dbReference type="EMBL" id="AP014959">
    <property type="protein sequence ID" value="BAS86307.1"/>
    <property type="molecule type" value="Genomic_DNA"/>
</dbReference>
<dbReference type="EMBL" id="AK071734">
    <property type="status" value="NOT_ANNOTATED_CDS"/>
    <property type="molecule type" value="mRNA"/>
</dbReference>
<dbReference type="RefSeq" id="XP_015631231.1">
    <property type="nucleotide sequence ID" value="XM_015775745.1"/>
</dbReference>
<dbReference type="SMR" id="Q75KV9"/>
<dbReference type="FunCoup" id="Q75KV9">
    <property type="interactions" value="487"/>
</dbReference>
<dbReference type="STRING" id="39947.Q75KV9"/>
<dbReference type="PaxDb" id="39947-Q75KV9"/>
<dbReference type="EnsemblPlants" id="Os03t0741100-01">
    <property type="protein sequence ID" value="Os03t0741100-01"/>
    <property type="gene ID" value="Os03g0741100"/>
</dbReference>
<dbReference type="Gramene" id="Os03t0741100-01">
    <property type="protein sequence ID" value="Os03t0741100-01"/>
    <property type="gene ID" value="Os03g0741100"/>
</dbReference>
<dbReference type="KEGG" id="dosa:Os03g0741100"/>
<dbReference type="eggNOG" id="ENOG502S1P8">
    <property type="taxonomic scope" value="Eukaryota"/>
</dbReference>
<dbReference type="HOGENOM" id="CLU_078911_0_0_1"/>
<dbReference type="InParanoid" id="Q75KV9"/>
<dbReference type="OMA" id="WSQTSHV"/>
<dbReference type="OrthoDB" id="1885111at2759"/>
<dbReference type="Proteomes" id="UP000000763">
    <property type="component" value="Chromosome 3"/>
</dbReference>
<dbReference type="Proteomes" id="UP000059680">
    <property type="component" value="Chromosome 3"/>
</dbReference>
<dbReference type="GO" id="GO:0005634">
    <property type="term" value="C:nucleus"/>
    <property type="evidence" value="ECO:0000318"/>
    <property type="project" value="GO_Central"/>
</dbReference>
<dbReference type="GO" id="GO:0046983">
    <property type="term" value="F:protein dimerization activity"/>
    <property type="evidence" value="ECO:0007669"/>
    <property type="project" value="InterPro"/>
</dbReference>
<dbReference type="GO" id="GO:0000976">
    <property type="term" value="F:transcription cis-regulatory region binding"/>
    <property type="evidence" value="ECO:0000318"/>
    <property type="project" value="GO_Central"/>
</dbReference>
<dbReference type="GO" id="GO:0006355">
    <property type="term" value="P:regulation of DNA-templated transcription"/>
    <property type="evidence" value="ECO:0000305"/>
    <property type="project" value="Gramene"/>
</dbReference>
<dbReference type="GO" id="GO:0009414">
    <property type="term" value="P:response to water deprivation"/>
    <property type="evidence" value="ECO:0000315"/>
    <property type="project" value="UniProtKB"/>
</dbReference>
<dbReference type="Gene3D" id="4.10.280.10">
    <property type="entry name" value="Helix-loop-helix DNA-binding domain"/>
    <property type="match status" value="1"/>
</dbReference>
<dbReference type="InterPro" id="IPR044658">
    <property type="entry name" value="bHLH92/bHLH041-like"/>
</dbReference>
<dbReference type="InterPro" id="IPR011598">
    <property type="entry name" value="bHLH_dom"/>
</dbReference>
<dbReference type="InterPro" id="IPR036638">
    <property type="entry name" value="HLH_DNA-bd_sf"/>
</dbReference>
<dbReference type="PANTHER" id="PTHR46665">
    <property type="entry name" value="TRANSCRIPTION FACTOR BHLH041-RELATED-RELATED"/>
    <property type="match status" value="1"/>
</dbReference>
<dbReference type="PANTHER" id="PTHR46665:SF6">
    <property type="entry name" value="TRANSCRIPTION FACTOR BHLH92"/>
    <property type="match status" value="1"/>
</dbReference>
<dbReference type="Pfam" id="PF00010">
    <property type="entry name" value="HLH"/>
    <property type="match status" value="1"/>
</dbReference>
<dbReference type="SMART" id="SM00353">
    <property type="entry name" value="HLH"/>
    <property type="match status" value="1"/>
</dbReference>
<dbReference type="SUPFAM" id="SSF47459">
    <property type="entry name" value="HLH, helix-loop-helix DNA-binding domain"/>
    <property type="match status" value="1"/>
</dbReference>
<dbReference type="PROSITE" id="PS50888">
    <property type="entry name" value="BHLH"/>
    <property type="match status" value="1"/>
</dbReference>
<comment type="function">
    <text evidence="3">May act on an initial response of jasmonate-regulated gene expression toward drought tolerance as part of a BHLH148-TIFY11D/JAZ12-COI1A complex.</text>
</comment>
<comment type="subunit">
    <text evidence="3">Interacts with TIFY10A/JAZ6, TIFY10B/JAZ7, TIFY11A/JAZ9, TIFY11C/JAZ11, and TIFY11D/JAZ12.</text>
</comment>
<comment type="subcellular location">
    <subcellularLocation>
        <location evidence="1">Nucleus</location>
    </subcellularLocation>
</comment>
<comment type="induction">
    <text evidence="3">By abscisic acid (ABA), methyl jasmonate (MeJA), drought, cold, salt and wounding.</text>
</comment>
<comment type="miscellaneous">
    <text evidence="3">Plants over-expressing BHLH148 display drought tolerance.</text>
</comment>
<comment type="similarity">
    <text>Belongs to the bHLH protein family.</text>
</comment>
<feature type="chain" id="PRO_0000434864" description="Transcription factor BHLH148">
    <location>
        <begin position="1"/>
        <end position="299"/>
    </location>
</feature>
<feature type="domain" description="bHLH" evidence="1">
    <location>
        <begin position="127"/>
        <end position="176"/>
    </location>
</feature>
<feature type="region of interest" description="Disordered" evidence="2">
    <location>
        <begin position="90"/>
        <end position="127"/>
    </location>
</feature>
<feature type="region of interest" description="Basic motif; degenerate" evidence="1">
    <location>
        <begin position="127"/>
        <end position="140"/>
    </location>
</feature>
<feature type="region of interest" description="Helix-loop-helix motif" evidence="1">
    <location>
        <begin position="141"/>
        <end position="176"/>
    </location>
</feature>
<feature type="region of interest" description="Disordered" evidence="2">
    <location>
        <begin position="273"/>
        <end position="299"/>
    </location>
</feature>
<feature type="compositionally biased region" description="Acidic residues" evidence="2">
    <location>
        <begin position="102"/>
        <end position="111"/>
    </location>
</feature>
<feature type="compositionally biased region" description="Polar residues" evidence="2">
    <location>
        <begin position="288"/>
        <end position="299"/>
    </location>
</feature>
<feature type="sequence conflict" description="In Ref. 6; AK071734 and 1; ADX60283." evidence="5" ref="6 1">
    <original>K</original>
    <variation>E</variation>
    <location>
        <position position="159"/>
    </location>
</feature>
<feature type="sequence conflict" description="In Ref. 6; AK071734 and 1; ADX60283." evidence="5" ref="6 1">
    <original>G</original>
    <variation>S</variation>
    <location>
        <position position="229"/>
    </location>
</feature>
<reference key="1">
    <citation type="journal article" date="2009" name="Plant Physiol.">
        <title>GRASSIUS: a platform for comparative regulatory genomics across the grasses.</title>
        <authorList>
            <person name="Yilmaz A."/>
            <person name="Nishiyama M.Y."/>
            <person name="Fuentes B.G."/>
            <person name="Souza G.M."/>
            <person name="Janies D."/>
            <person name="Gray J."/>
            <person name="Grotewold E."/>
        </authorList>
    </citation>
    <scope>NUCLEOTIDE SEQUENCE [MRNA]</scope>
    <source>
        <strain>cv. Nipponbare</strain>
    </source>
</reference>
<reference key="2">
    <citation type="journal article" date="2005" name="Genome Res.">
        <title>Sequence, annotation, and analysis of synteny between rice chromosome 3 and diverged grass species.</title>
        <authorList>
            <consortium name="The rice chromosome 3 sequencing consortium"/>
            <person name="Buell C.R."/>
            <person name="Yuan Q."/>
            <person name="Ouyang S."/>
            <person name="Liu J."/>
            <person name="Zhu W."/>
            <person name="Wang A."/>
            <person name="Maiti R."/>
            <person name="Haas B."/>
            <person name="Wortman J."/>
            <person name="Pertea M."/>
            <person name="Jones K.M."/>
            <person name="Kim M."/>
            <person name="Overton L."/>
            <person name="Tsitrin T."/>
            <person name="Fadrosh D."/>
            <person name="Bera J."/>
            <person name="Weaver B."/>
            <person name="Jin S."/>
            <person name="Johri S."/>
            <person name="Reardon M."/>
            <person name="Webb K."/>
            <person name="Hill J."/>
            <person name="Moffat K."/>
            <person name="Tallon L."/>
            <person name="Van Aken S."/>
            <person name="Lewis M."/>
            <person name="Utterback T."/>
            <person name="Feldblyum T."/>
            <person name="Zismann V."/>
            <person name="Iobst S."/>
            <person name="Hsiao J."/>
            <person name="de Vazeille A.R."/>
            <person name="Salzberg S.L."/>
            <person name="White O."/>
            <person name="Fraser C.M."/>
            <person name="Yu Y."/>
            <person name="Kim H."/>
            <person name="Rambo T."/>
            <person name="Currie J."/>
            <person name="Collura K."/>
            <person name="Kernodle-Thompson S."/>
            <person name="Wei F."/>
            <person name="Kudrna K."/>
            <person name="Ammiraju J.S.S."/>
            <person name="Luo M."/>
            <person name="Goicoechea J.L."/>
            <person name="Wing R.A."/>
            <person name="Henry D."/>
            <person name="Oates R."/>
            <person name="Palmer M."/>
            <person name="Pries G."/>
            <person name="Saski C."/>
            <person name="Simmons J."/>
            <person name="Soderlund C."/>
            <person name="Nelson W."/>
            <person name="de la Bastide M."/>
            <person name="Spiegel L."/>
            <person name="Nascimento L."/>
            <person name="Huang E."/>
            <person name="Preston R."/>
            <person name="Zutavern T."/>
            <person name="Palmer L."/>
            <person name="O'Shaughnessy A."/>
            <person name="Dike S."/>
            <person name="McCombie W.R."/>
            <person name="Minx P."/>
            <person name="Cordum H."/>
            <person name="Wilson R."/>
            <person name="Jin W."/>
            <person name="Lee H.R."/>
            <person name="Jiang J."/>
            <person name="Jackson S."/>
        </authorList>
    </citation>
    <scope>NUCLEOTIDE SEQUENCE [LARGE SCALE GENOMIC DNA]</scope>
    <source>
        <strain>cv. Nipponbare</strain>
    </source>
</reference>
<reference key="3">
    <citation type="journal article" date="2005" name="Nature">
        <title>The map-based sequence of the rice genome.</title>
        <authorList>
            <consortium name="International rice genome sequencing project (IRGSP)"/>
        </authorList>
    </citation>
    <scope>NUCLEOTIDE SEQUENCE [LARGE SCALE GENOMIC DNA]</scope>
    <source>
        <strain>cv. Nipponbare</strain>
    </source>
</reference>
<reference key="4">
    <citation type="journal article" date="2008" name="Nucleic Acids Res.">
        <title>The rice annotation project database (RAP-DB): 2008 update.</title>
        <authorList>
            <consortium name="The rice annotation project (RAP)"/>
        </authorList>
    </citation>
    <scope>GENOME REANNOTATION</scope>
    <source>
        <strain>cv. Nipponbare</strain>
    </source>
</reference>
<reference key="5">
    <citation type="journal article" date="2013" name="Rice">
        <title>Improvement of the Oryza sativa Nipponbare reference genome using next generation sequence and optical map data.</title>
        <authorList>
            <person name="Kawahara Y."/>
            <person name="de la Bastide M."/>
            <person name="Hamilton J.P."/>
            <person name="Kanamori H."/>
            <person name="McCombie W.R."/>
            <person name="Ouyang S."/>
            <person name="Schwartz D.C."/>
            <person name="Tanaka T."/>
            <person name="Wu J."/>
            <person name="Zhou S."/>
            <person name="Childs K.L."/>
            <person name="Davidson R.M."/>
            <person name="Lin H."/>
            <person name="Quesada-Ocampo L."/>
            <person name="Vaillancourt B."/>
            <person name="Sakai H."/>
            <person name="Lee S.S."/>
            <person name="Kim J."/>
            <person name="Numa H."/>
            <person name="Itoh T."/>
            <person name="Buell C.R."/>
            <person name="Matsumoto T."/>
        </authorList>
    </citation>
    <scope>GENOME REANNOTATION</scope>
    <source>
        <strain>cv. Nipponbare</strain>
    </source>
</reference>
<reference key="6">
    <citation type="journal article" date="2003" name="Science">
        <title>Collection, mapping, and annotation of over 28,000 cDNA clones from japonica rice.</title>
        <authorList>
            <consortium name="The rice full-length cDNA consortium"/>
        </authorList>
    </citation>
    <scope>NUCLEOTIDE SEQUENCE [LARGE SCALE MRNA]</scope>
    <source>
        <strain>cv. Nipponbare</strain>
    </source>
</reference>
<reference key="7">
    <citation type="journal article" date="2010" name="Plant Physiol.">
        <title>Genome-wide classification and evolutionary analysis of the bHLH family of transcription factors in Arabidopsis, poplar, rice, moss, and algae.</title>
        <authorList>
            <person name="Carretero-Paulet L."/>
            <person name="Galstyan A."/>
            <person name="Roig-Villanova I."/>
            <person name="Martinez-Garcia J.F."/>
            <person name="Bilbao-Castro J.R."/>
            <person name="Robertson D.L."/>
        </authorList>
    </citation>
    <scope>GENE FAMILY</scope>
    <scope>NOMENCLATURE</scope>
</reference>
<reference key="8">
    <citation type="journal article" date="2011" name="Plant J.">
        <title>OsbHLH148, a basic helix-loop-helix protein, interacts with OsJAZ proteins in a jasmonate signaling pathway leading to drought tolerance in rice.</title>
        <authorList>
            <person name="Seo J.S."/>
            <person name="Joo J."/>
            <person name="Kim M.J."/>
            <person name="Kim Y.K."/>
            <person name="Nahm B.H."/>
            <person name="Song S.I."/>
            <person name="Cheong J.J."/>
            <person name="Lee J.S."/>
            <person name="Kim J.K."/>
            <person name="Choi Y.D."/>
        </authorList>
    </citation>
    <scope>FUNCTION</scope>
    <scope>INTERACTION WITH TIFY10A/JAZ6; TIFY10B/JAZ7; TIFY11A/JAZ9; TIFY11C/JAZ11 AND TIFY11D/JAZ12</scope>
    <scope>INDUCTION</scope>
</reference>
<proteinExistence type="evidence at protein level"/>
<organism>
    <name type="scientific">Oryza sativa subsp. japonica</name>
    <name type="common">Rice</name>
    <dbReference type="NCBI Taxonomy" id="39947"/>
    <lineage>
        <taxon>Eukaryota</taxon>
        <taxon>Viridiplantae</taxon>
        <taxon>Streptophyta</taxon>
        <taxon>Embryophyta</taxon>
        <taxon>Tracheophyta</taxon>
        <taxon>Spermatophyta</taxon>
        <taxon>Magnoliopsida</taxon>
        <taxon>Liliopsida</taxon>
        <taxon>Poales</taxon>
        <taxon>Poaceae</taxon>
        <taxon>BOP clade</taxon>
        <taxon>Oryzoideae</taxon>
        <taxon>Oryzeae</taxon>
        <taxon>Oryzinae</taxon>
        <taxon>Oryza</taxon>
        <taxon>Oryza sativa</taxon>
    </lineage>
</organism>
<accession>Q75KV9</accession>
<accession>A0A0P0W349</accession>
<accession>F1DKB3</accession>
<evidence type="ECO:0000255" key="1">
    <source>
        <dbReference type="PROSITE-ProRule" id="PRU00981"/>
    </source>
</evidence>
<evidence type="ECO:0000256" key="2">
    <source>
        <dbReference type="SAM" id="MobiDB-lite"/>
    </source>
</evidence>
<evidence type="ECO:0000269" key="3">
    <source>
    </source>
</evidence>
<evidence type="ECO:0000303" key="4">
    <source>
    </source>
</evidence>
<evidence type="ECO:0000305" key="5"/>
<evidence type="ECO:0000312" key="6">
    <source>
        <dbReference type="EMBL" id="AAR87309.1"/>
    </source>
</evidence>
<evidence type="ECO:0000312" key="7">
    <source>
        <dbReference type="EMBL" id="ABF98794.1"/>
    </source>
</evidence>
<evidence type="ECO:0000312" key="8">
    <source>
        <dbReference type="EMBL" id="BAF13135.1"/>
    </source>
</evidence>
<sequence length="299" mass="32908">MQMESYYGAFHADEAAFFFPHHVPASPELPFGLIASPEPEPEPEQAAAEARQSAFQEYGGAVHAGAPAAAGAVTTGGTNIHRRVMDVLGRMGGGGGGGEKGEGEEMEEEEEVPQRRRRGQGADVESSRGFRHMMRERQRREKLSQSYADLYAMVSSRSKGDKNSIVQSAAIYIHELKVARDQLQRRNEELKAQIMGHDEQQPCVTVQFEVDEPSSSIDSMIAALRRLKGMSVKARGIRSSMSGNRLWTEMNVETTIAACEVEKAVEEALKEVERNQPDSDAPFPGSKGWTQTSHVQNVF</sequence>
<gene>
    <name evidence="4" type="primary">BHLH148</name>
    <name evidence="8" type="ordered locus">Os03g0741100</name>
    <name evidence="7" type="ordered locus">LOC_Os03g53020</name>
    <name evidence="6" type="ORF">OJ1365_D05.18</name>
</gene>
<name>BH148_ORYSJ</name>
<keyword id="KW-0238">DNA-binding</keyword>
<keyword id="KW-0539">Nucleus</keyword>
<keyword id="KW-1185">Reference proteome</keyword>
<keyword id="KW-0346">Stress response</keyword>
<keyword id="KW-0804">Transcription</keyword>
<keyword id="KW-0805">Transcription regulation</keyword>